<reference key="1">
    <citation type="journal article" date="2009" name="PLoS ONE">
        <title>The complete genome of Teredinibacter turnerae T7901: an intracellular endosymbiont of marine wood-boring bivalves (shipworms).</title>
        <authorList>
            <person name="Yang J.C."/>
            <person name="Madupu R."/>
            <person name="Durkin A.S."/>
            <person name="Ekborg N.A."/>
            <person name="Pedamallu C.S."/>
            <person name="Hostetler J.B."/>
            <person name="Radune D."/>
            <person name="Toms B.S."/>
            <person name="Henrissat B."/>
            <person name="Coutinho P.M."/>
            <person name="Schwarz S."/>
            <person name="Field L."/>
            <person name="Trindade-Silva A.E."/>
            <person name="Soares C.A.G."/>
            <person name="Elshahawi S."/>
            <person name="Hanora A."/>
            <person name="Schmidt E.W."/>
            <person name="Haygood M.G."/>
            <person name="Posfai J."/>
            <person name="Benner J."/>
            <person name="Madinger C."/>
            <person name="Nove J."/>
            <person name="Anton B."/>
            <person name="Chaudhary K."/>
            <person name="Foster J."/>
            <person name="Holman A."/>
            <person name="Kumar S."/>
            <person name="Lessard P.A."/>
            <person name="Luyten Y.A."/>
            <person name="Slatko B."/>
            <person name="Wood N."/>
            <person name="Wu B."/>
            <person name="Teplitski M."/>
            <person name="Mougous J.D."/>
            <person name="Ward N."/>
            <person name="Eisen J.A."/>
            <person name="Badger J.H."/>
            <person name="Distel D.L."/>
        </authorList>
    </citation>
    <scope>NUCLEOTIDE SEQUENCE [LARGE SCALE GENOMIC DNA]</scope>
    <source>
        <strain>ATCC 39867 / T7901</strain>
    </source>
</reference>
<dbReference type="EC" id="3.4.23.36" evidence="1"/>
<dbReference type="EMBL" id="CP001614">
    <property type="protein sequence ID" value="ACR12655.1"/>
    <property type="molecule type" value="Genomic_DNA"/>
</dbReference>
<dbReference type="RefSeq" id="WP_015818767.1">
    <property type="nucleotide sequence ID" value="NC_012997.1"/>
</dbReference>
<dbReference type="SMR" id="C5BQX3"/>
<dbReference type="STRING" id="377629.TERTU_1041"/>
<dbReference type="KEGG" id="ttu:TERTU_1041"/>
<dbReference type="eggNOG" id="COG0597">
    <property type="taxonomic scope" value="Bacteria"/>
</dbReference>
<dbReference type="HOGENOM" id="CLU_083252_4_0_6"/>
<dbReference type="OrthoDB" id="9810259at2"/>
<dbReference type="UniPathway" id="UPA00665"/>
<dbReference type="Proteomes" id="UP000009080">
    <property type="component" value="Chromosome"/>
</dbReference>
<dbReference type="GO" id="GO:0005886">
    <property type="term" value="C:plasma membrane"/>
    <property type="evidence" value="ECO:0007669"/>
    <property type="project" value="UniProtKB-SubCell"/>
</dbReference>
<dbReference type="GO" id="GO:0004190">
    <property type="term" value="F:aspartic-type endopeptidase activity"/>
    <property type="evidence" value="ECO:0007669"/>
    <property type="project" value="UniProtKB-UniRule"/>
</dbReference>
<dbReference type="GO" id="GO:0006508">
    <property type="term" value="P:proteolysis"/>
    <property type="evidence" value="ECO:0007669"/>
    <property type="project" value="UniProtKB-KW"/>
</dbReference>
<dbReference type="HAMAP" id="MF_00161">
    <property type="entry name" value="LspA"/>
    <property type="match status" value="1"/>
</dbReference>
<dbReference type="InterPro" id="IPR001872">
    <property type="entry name" value="Peptidase_A8"/>
</dbReference>
<dbReference type="NCBIfam" id="TIGR00077">
    <property type="entry name" value="lspA"/>
    <property type="match status" value="1"/>
</dbReference>
<dbReference type="PANTHER" id="PTHR33695">
    <property type="entry name" value="LIPOPROTEIN SIGNAL PEPTIDASE"/>
    <property type="match status" value="1"/>
</dbReference>
<dbReference type="PANTHER" id="PTHR33695:SF1">
    <property type="entry name" value="LIPOPROTEIN SIGNAL PEPTIDASE"/>
    <property type="match status" value="1"/>
</dbReference>
<dbReference type="Pfam" id="PF01252">
    <property type="entry name" value="Peptidase_A8"/>
    <property type="match status" value="1"/>
</dbReference>
<dbReference type="PRINTS" id="PR00781">
    <property type="entry name" value="LIPOSIGPTASE"/>
</dbReference>
<dbReference type="PROSITE" id="PS00855">
    <property type="entry name" value="SPASE_II"/>
    <property type="match status" value="1"/>
</dbReference>
<feature type="chain" id="PRO_1000203596" description="Lipoprotein signal peptidase">
    <location>
        <begin position="1"/>
        <end position="168"/>
    </location>
</feature>
<feature type="transmembrane region" description="Helical" evidence="1">
    <location>
        <begin position="6"/>
        <end position="26"/>
    </location>
</feature>
<feature type="transmembrane region" description="Helical" evidence="1">
    <location>
        <begin position="70"/>
        <end position="90"/>
    </location>
</feature>
<feature type="transmembrane region" description="Helical" evidence="1">
    <location>
        <begin position="98"/>
        <end position="118"/>
    </location>
</feature>
<feature type="transmembrane region" description="Helical" evidence="1">
    <location>
        <begin position="139"/>
        <end position="159"/>
    </location>
</feature>
<feature type="active site" evidence="1">
    <location>
        <position position="123"/>
    </location>
</feature>
<feature type="active site" evidence="1">
    <location>
        <position position="141"/>
    </location>
</feature>
<comment type="function">
    <text evidence="1">This protein specifically catalyzes the removal of signal peptides from prolipoproteins.</text>
</comment>
<comment type="catalytic activity">
    <reaction evidence="1">
        <text>Release of signal peptides from bacterial membrane prolipoproteins. Hydrolyzes -Xaa-Yaa-Zaa-|-(S,diacylglyceryl)Cys-, in which Xaa is hydrophobic (preferably Leu), and Yaa (Ala or Ser) and Zaa (Gly or Ala) have small, neutral side chains.</text>
        <dbReference type="EC" id="3.4.23.36"/>
    </reaction>
</comment>
<comment type="pathway">
    <text evidence="1">Protein modification; lipoprotein biosynthesis (signal peptide cleavage).</text>
</comment>
<comment type="subcellular location">
    <subcellularLocation>
        <location evidence="1">Cell inner membrane</location>
        <topology evidence="1">Multi-pass membrane protein</topology>
    </subcellularLocation>
</comment>
<comment type="similarity">
    <text evidence="1">Belongs to the peptidase A8 family.</text>
</comment>
<accession>C5BQX3</accession>
<sequence>MHKLNVLAALKWYGVALLVILLDQITKNVASHMLVLHQPEPITSFFNFTLRHNFGAAFSMFHDAGGWQRWFLALLAAGVSVLLIFWIAKLPKQKWMEALALALVLGGALGNLYDRMLLGYVVDFIVVHYKEHEWPAFNIADSAICIGAALLVWDSLFGTKVAKYGDAK</sequence>
<organism>
    <name type="scientific">Teredinibacter turnerae (strain ATCC 39867 / T7901)</name>
    <dbReference type="NCBI Taxonomy" id="377629"/>
    <lineage>
        <taxon>Bacteria</taxon>
        <taxon>Pseudomonadati</taxon>
        <taxon>Pseudomonadota</taxon>
        <taxon>Gammaproteobacteria</taxon>
        <taxon>Cellvibrionales</taxon>
        <taxon>Cellvibrionaceae</taxon>
        <taxon>Teredinibacter</taxon>
    </lineage>
</organism>
<evidence type="ECO:0000255" key="1">
    <source>
        <dbReference type="HAMAP-Rule" id="MF_00161"/>
    </source>
</evidence>
<protein>
    <recommendedName>
        <fullName evidence="1">Lipoprotein signal peptidase</fullName>
        <ecNumber evidence="1">3.4.23.36</ecNumber>
    </recommendedName>
    <alternativeName>
        <fullName evidence="1">Prolipoprotein signal peptidase</fullName>
    </alternativeName>
    <alternativeName>
        <fullName evidence="1">Signal peptidase II</fullName>
        <shortName evidence="1">SPase II</shortName>
    </alternativeName>
</protein>
<name>LSPA_TERTT</name>
<keyword id="KW-0064">Aspartyl protease</keyword>
<keyword id="KW-0997">Cell inner membrane</keyword>
<keyword id="KW-1003">Cell membrane</keyword>
<keyword id="KW-0378">Hydrolase</keyword>
<keyword id="KW-0472">Membrane</keyword>
<keyword id="KW-0645">Protease</keyword>
<keyword id="KW-1185">Reference proteome</keyword>
<keyword id="KW-0812">Transmembrane</keyword>
<keyword id="KW-1133">Transmembrane helix</keyword>
<proteinExistence type="inferred from homology"/>
<gene>
    <name evidence="1" type="primary">lspA</name>
    <name type="ordered locus">TERTU_1041</name>
</gene>